<gene>
    <name evidence="1" type="primary">rpmG2</name>
    <name type="synonym">rpmGA</name>
    <name type="ordered locus">ABC1721</name>
</gene>
<dbReference type="EMBL" id="AP006627">
    <property type="protein sequence ID" value="BAD64256.1"/>
    <property type="molecule type" value="Genomic_DNA"/>
</dbReference>
<dbReference type="SMR" id="Q5WH99"/>
<dbReference type="STRING" id="66692.ABC1721"/>
<dbReference type="KEGG" id="bcl:ABC1721"/>
<dbReference type="eggNOG" id="COG0267">
    <property type="taxonomic scope" value="Bacteria"/>
</dbReference>
<dbReference type="HOGENOM" id="CLU_190949_0_1_9"/>
<dbReference type="OrthoDB" id="197660at2"/>
<dbReference type="Proteomes" id="UP000001168">
    <property type="component" value="Chromosome"/>
</dbReference>
<dbReference type="GO" id="GO:0005737">
    <property type="term" value="C:cytoplasm"/>
    <property type="evidence" value="ECO:0007669"/>
    <property type="project" value="UniProtKB-ARBA"/>
</dbReference>
<dbReference type="GO" id="GO:1990904">
    <property type="term" value="C:ribonucleoprotein complex"/>
    <property type="evidence" value="ECO:0007669"/>
    <property type="project" value="UniProtKB-KW"/>
</dbReference>
<dbReference type="GO" id="GO:0005840">
    <property type="term" value="C:ribosome"/>
    <property type="evidence" value="ECO:0007669"/>
    <property type="project" value="UniProtKB-KW"/>
</dbReference>
<dbReference type="GO" id="GO:0003735">
    <property type="term" value="F:structural constituent of ribosome"/>
    <property type="evidence" value="ECO:0007669"/>
    <property type="project" value="InterPro"/>
</dbReference>
<dbReference type="GO" id="GO:0006412">
    <property type="term" value="P:translation"/>
    <property type="evidence" value="ECO:0007669"/>
    <property type="project" value="UniProtKB-UniRule"/>
</dbReference>
<dbReference type="Gene3D" id="2.20.28.120">
    <property type="entry name" value="Ribosomal protein L33"/>
    <property type="match status" value="1"/>
</dbReference>
<dbReference type="HAMAP" id="MF_00294">
    <property type="entry name" value="Ribosomal_bL33"/>
    <property type="match status" value="1"/>
</dbReference>
<dbReference type="InterPro" id="IPR001705">
    <property type="entry name" value="Ribosomal_bL33"/>
</dbReference>
<dbReference type="InterPro" id="IPR018264">
    <property type="entry name" value="Ribosomal_bL33_CS"/>
</dbReference>
<dbReference type="InterPro" id="IPR038584">
    <property type="entry name" value="Ribosomal_bL33_sf"/>
</dbReference>
<dbReference type="InterPro" id="IPR011332">
    <property type="entry name" value="Ribosomal_zn-bd"/>
</dbReference>
<dbReference type="NCBIfam" id="NF001764">
    <property type="entry name" value="PRK00504.1"/>
    <property type="match status" value="1"/>
</dbReference>
<dbReference type="NCBIfam" id="NF001860">
    <property type="entry name" value="PRK00595.1"/>
    <property type="match status" value="1"/>
</dbReference>
<dbReference type="NCBIfam" id="TIGR01023">
    <property type="entry name" value="rpmG_bact"/>
    <property type="match status" value="1"/>
</dbReference>
<dbReference type="PANTHER" id="PTHR43168">
    <property type="entry name" value="50S RIBOSOMAL PROTEIN L33, CHLOROPLASTIC"/>
    <property type="match status" value="1"/>
</dbReference>
<dbReference type="PANTHER" id="PTHR43168:SF2">
    <property type="entry name" value="LARGE RIBOSOMAL SUBUNIT PROTEIN BL33C"/>
    <property type="match status" value="1"/>
</dbReference>
<dbReference type="Pfam" id="PF00471">
    <property type="entry name" value="Ribosomal_L33"/>
    <property type="match status" value="1"/>
</dbReference>
<dbReference type="SUPFAM" id="SSF57829">
    <property type="entry name" value="Zn-binding ribosomal proteins"/>
    <property type="match status" value="1"/>
</dbReference>
<dbReference type="PROSITE" id="PS00582">
    <property type="entry name" value="RIBOSOMAL_L33"/>
    <property type="match status" value="1"/>
</dbReference>
<comment type="similarity">
    <text evidence="1">Belongs to the bacterial ribosomal protein bL33 family.</text>
</comment>
<name>RL332_SHOC1</name>
<reference key="1">
    <citation type="submission" date="2003-10" db="EMBL/GenBank/DDBJ databases">
        <title>The complete genome sequence of the alkaliphilic Bacillus clausii KSM-K16.</title>
        <authorList>
            <person name="Takaki Y."/>
            <person name="Kageyama Y."/>
            <person name="Shimamura S."/>
            <person name="Suzuki H."/>
            <person name="Nishi S."/>
            <person name="Hatada Y."/>
            <person name="Kawai S."/>
            <person name="Ito S."/>
            <person name="Horikoshi K."/>
        </authorList>
    </citation>
    <scope>NUCLEOTIDE SEQUENCE [LARGE SCALE GENOMIC DNA]</scope>
    <source>
        <strain>KSM-K16</strain>
    </source>
</reference>
<keyword id="KW-1185">Reference proteome</keyword>
<keyword id="KW-0687">Ribonucleoprotein</keyword>
<keyword id="KW-0689">Ribosomal protein</keyword>
<evidence type="ECO:0000255" key="1">
    <source>
        <dbReference type="HAMAP-Rule" id="MF_00294"/>
    </source>
</evidence>
<protein>
    <recommendedName>
        <fullName evidence="1">Large ribosomal subunit protein bL33B</fullName>
    </recommendedName>
    <alternativeName>
        <fullName evidence="1">50S ribosomal protein L33 2</fullName>
    </alternativeName>
</protein>
<accession>Q5WH99</accession>
<sequence length="49" mass="5913">MRVQVTLACTETGDRNYITTKNKRTNPERIELKKYSPRLKRHTLHRETK</sequence>
<organism>
    <name type="scientific">Shouchella clausii (strain KSM-K16)</name>
    <name type="common">Alkalihalobacillus clausii</name>
    <dbReference type="NCBI Taxonomy" id="66692"/>
    <lineage>
        <taxon>Bacteria</taxon>
        <taxon>Bacillati</taxon>
        <taxon>Bacillota</taxon>
        <taxon>Bacilli</taxon>
        <taxon>Bacillales</taxon>
        <taxon>Bacillaceae</taxon>
        <taxon>Shouchella</taxon>
    </lineage>
</organism>
<proteinExistence type="inferred from homology"/>
<feature type="chain" id="PRO_0000356391" description="Large ribosomal subunit protein bL33B">
    <location>
        <begin position="1"/>
        <end position="49"/>
    </location>
</feature>